<evidence type="ECO:0000250" key="1"/>
<evidence type="ECO:0000255" key="2">
    <source>
        <dbReference type="HAMAP-Rule" id="MF_00729"/>
    </source>
</evidence>
<comment type="catalytic activity">
    <reaction evidence="2">
        <text>beta-D-fructose 1,6-bisphosphate = D-glyceraldehyde 3-phosphate + dihydroxyacetone phosphate</text>
        <dbReference type="Rhea" id="RHEA:14729"/>
        <dbReference type="ChEBI" id="CHEBI:32966"/>
        <dbReference type="ChEBI" id="CHEBI:57642"/>
        <dbReference type="ChEBI" id="CHEBI:59776"/>
        <dbReference type="EC" id="4.1.2.13"/>
    </reaction>
</comment>
<comment type="pathway">
    <text evidence="2">Carbohydrate degradation; glycolysis; D-glyceraldehyde 3-phosphate and glycerone phosphate from D-glucose: step 4/4.</text>
</comment>
<comment type="similarity">
    <text evidence="2">Belongs to the class I fructose-bisphosphate aldolase family.</text>
</comment>
<dbReference type="EC" id="4.1.2.13" evidence="2"/>
<dbReference type="EMBL" id="BX571856">
    <property type="protein sequence ID" value="CAG41661.1"/>
    <property type="molecule type" value="Genomic_DNA"/>
</dbReference>
<dbReference type="RefSeq" id="WP_001031407.1">
    <property type="nucleotide sequence ID" value="NC_002952.2"/>
</dbReference>
<dbReference type="SMR" id="Q6GDJ7"/>
<dbReference type="KEGG" id="sar:SAR2684"/>
<dbReference type="HOGENOM" id="CLU_081560_0_0_9"/>
<dbReference type="UniPathway" id="UPA00109">
    <property type="reaction ID" value="UER00183"/>
</dbReference>
<dbReference type="Proteomes" id="UP000000596">
    <property type="component" value="Chromosome"/>
</dbReference>
<dbReference type="GO" id="GO:0004332">
    <property type="term" value="F:fructose-bisphosphate aldolase activity"/>
    <property type="evidence" value="ECO:0007669"/>
    <property type="project" value="UniProtKB-UniRule"/>
</dbReference>
<dbReference type="GO" id="GO:0006096">
    <property type="term" value="P:glycolytic process"/>
    <property type="evidence" value="ECO:0007669"/>
    <property type="project" value="UniProtKB-UniRule"/>
</dbReference>
<dbReference type="Gene3D" id="3.20.20.70">
    <property type="entry name" value="Aldolase class I"/>
    <property type="match status" value="1"/>
</dbReference>
<dbReference type="HAMAP" id="MF_00729">
    <property type="entry name" value="FBP_aldolase_1"/>
    <property type="match status" value="1"/>
</dbReference>
<dbReference type="InterPro" id="IPR013785">
    <property type="entry name" value="Aldolase_TIM"/>
</dbReference>
<dbReference type="InterPro" id="IPR000741">
    <property type="entry name" value="FBA_I"/>
</dbReference>
<dbReference type="InterPro" id="IPR023014">
    <property type="entry name" value="FBA_I_Gram+-type"/>
</dbReference>
<dbReference type="NCBIfam" id="NF003784">
    <property type="entry name" value="PRK05377.1"/>
    <property type="match status" value="1"/>
</dbReference>
<dbReference type="PANTHER" id="PTHR11627">
    <property type="entry name" value="FRUCTOSE-BISPHOSPHATE ALDOLASE"/>
    <property type="match status" value="1"/>
</dbReference>
<dbReference type="Pfam" id="PF00274">
    <property type="entry name" value="Glycolytic"/>
    <property type="match status" value="1"/>
</dbReference>
<dbReference type="SUPFAM" id="SSF51569">
    <property type="entry name" value="Aldolase"/>
    <property type="match status" value="1"/>
</dbReference>
<protein>
    <recommendedName>
        <fullName evidence="2">Fructose-bisphosphate aldolase class 1</fullName>
        <ecNumber evidence="2">4.1.2.13</ecNumber>
    </recommendedName>
    <alternativeName>
        <fullName>Fructose-bisphosphate aldolase class I</fullName>
        <shortName evidence="2">FBP aldolase</shortName>
    </alternativeName>
</protein>
<gene>
    <name evidence="2" type="primary">fda</name>
    <name type="ordered locus">SAR2684</name>
</gene>
<proteinExistence type="inferred from homology"/>
<name>ALF1_STAAR</name>
<organism>
    <name type="scientific">Staphylococcus aureus (strain MRSA252)</name>
    <dbReference type="NCBI Taxonomy" id="282458"/>
    <lineage>
        <taxon>Bacteria</taxon>
        <taxon>Bacillati</taxon>
        <taxon>Bacillota</taxon>
        <taxon>Bacilli</taxon>
        <taxon>Bacillales</taxon>
        <taxon>Staphylococcaceae</taxon>
        <taxon>Staphylococcus</taxon>
    </lineage>
</organism>
<accession>Q6GDJ7</accession>
<feature type="initiator methionine" description="Removed" evidence="1">
    <location>
        <position position="1"/>
    </location>
</feature>
<feature type="chain" id="PRO_0000216906" description="Fructose-bisphosphate aldolase class 1">
    <location>
        <begin position="2"/>
        <end position="296"/>
    </location>
</feature>
<feature type="active site" description="Proton acceptor" evidence="2">
    <location>
        <position position="175"/>
    </location>
</feature>
<feature type="active site" description="Schiff-base intermediate with dihydroxyacetone-P" evidence="2">
    <location>
        <position position="212"/>
    </location>
</feature>
<reference key="1">
    <citation type="journal article" date="2004" name="Proc. Natl. Acad. Sci. U.S.A.">
        <title>Complete genomes of two clinical Staphylococcus aureus strains: evidence for the rapid evolution of virulence and drug resistance.</title>
        <authorList>
            <person name="Holden M.T.G."/>
            <person name="Feil E.J."/>
            <person name="Lindsay J.A."/>
            <person name="Peacock S.J."/>
            <person name="Day N.P.J."/>
            <person name="Enright M.C."/>
            <person name="Foster T.J."/>
            <person name="Moore C.E."/>
            <person name="Hurst L."/>
            <person name="Atkin R."/>
            <person name="Barron A."/>
            <person name="Bason N."/>
            <person name="Bentley S.D."/>
            <person name="Chillingworth C."/>
            <person name="Chillingworth T."/>
            <person name="Churcher C."/>
            <person name="Clark L."/>
            <person name="Corton C."/>
            <person name="Cronin A."/>
            <person name="Doggett J."/>
            <person name="Dowd L."/>
            <person name="Feltwell T."/>
            <person name="Hance Z."/>
            <person name="Harris B."/>
            <person name="Hauser H."/>
            <person name="Holroyd S."/>
            <person name="Jagels K."/>
            <person name="James K.D."/>
            <person name="Lennard N."/>
            <person name="Line A."/>
            <person name="Mayes R."/>
            <person name="Moule S."/>
            <person name="Mungall K."/>
            <person name="Ormond D."/>
            <person name="Quail M.A."/>
            <person name="Rabbinowitsch E."/>
            <person name="Rutherford K.M."/>
            <person name="Sanders M."/>
            <person name="Sharp S."/>
            <person name="Simmonds M."/>
            <person name="Stevens K."/>
            <person name="Whitehead S."/>
            <person name="Barrell B.G."/>
            <person name="Spratt B.G."/>
            <person name="Parkhill J."/>
        </authorList>
    </citation>
    <scope>NUCLEOTIDE SEQUENCE [LARGE SCALE GENOMIC DNA]</scope>
    <source>
        <strain>MRSA252</strain>
    </source>
</reference>
<sequence length="296" mass="32913">MNKEQLEKMKNGKGFIAALDQSGGSTPKALKEYGVNEDQYSNEDEMFQLVHDMRTRVVTSPSFSPDKILGAILFEQTMDREVEGKYTADYLADKGVVPFLKVDKGLAEEQNGVQLMKPIDNLDSLLDRANERHIFGTKMRSNILELNEQGIKDVVEQQFEVAKQIIAKGLVPIIEPEVNINAKDKAEIEKVLKAELKKGLDSLNADQLVMLKLTIPTEANLYKDLAEHPNVVRIVVLSGGYSREKANELLKDNAELIASFSRALASDLRAGQSKEEFDKALGDAVESIYDASVNKN</sequence>
<keyword id="KW-0324">Glycolysis</keyword>
<keyword id="KW-0456">Lyase</keyword>
<keyword id="KW-0704">Schiff base</keyword>